<name>PEHX_DICCH</name>
<evidence type="ECO:0000255" key="1">
    <source>
        <dbReference type="PROSITE-ProRule" id="PRU00316"/>
    </source>
</evidence>
<evidence type="ECO:0000255" key="2">
    <source>
        <dbReference type="PROSITE-ProRule" id="PRU10052"/>
    </source>
</evidence>
<evidence type="ECO:0000269" key="3">
    <source>
    </source>
</evidence>
<evidence type="ECO:0000305" key="4"/>
<comment type="function">
    <text evidence="3">Contributes significantly to bacterial utilization of polygalacturonate and the induction of pectate lyase in the presence of extracellular pectic polymers.</text>
</comment>
<comment type="catalytic activity">
    <reaction evidence="3">
        <text>[(1-&gt;4)-alpha-D-galacturonosyl](n) + H2O = alpha-D-galacturonosyl-(1-&gt;4)-D-galacturonate + [(1-&gt;4)-alpha-D-galacturonosyl](n-2)</text>
        <dbReference type="Rhea" id="RHEA:56232"/>
        <dbReference type="Rhea" id="RHEA-COMP:14570"/>
        <dbReference type="Rhea" id="RHEA-COMP:14734"/>
        <dbReference type="ChEBI" id="CHEBI:15377"/>
        <dbReference type="ChEBI" id="CHEBI:140523"/>
        <dbReference type="ChEBI" id="CHEBI:141004"/>
        <dbReference type="EC" id="3.2.1.82"/>
    </reaction>
</comment>
<comment type="subcellular location">
    <subcellularLocation>
        <location evidence="3">Secreted</location>
    </subcellularLocation>
</comment>
<comment type="similarity">
    <text evidence="4">Belongs to the glycosyl hydrolase 28 family.</text>
</comment>
<proteinExistence type="evidence at protein level"/>
<protein>
    <recommendedName>
        <fullName>Exo-poly-alpha-D-galacturonosidase</fullName>
        <shortName>Exo-PG</shortName>
        <ecNumber evidence="3">3.2.1.82</ecNumber>
    </recommendedName>
</protein>
<gene>
    <name type="primary">pehX</name>
</gene>
<dbReference type="EC" id="3.2.1.82" evidence="3"/>
<dbReference type="EMBL" id="M31308">
    <property type="protein sequence ID" value="AAA24842.1"/>
    <property type="molecule type" value="Genomic_DNA"/>
</dbReference>
<dbReference type="PIR" id="A36715">
    <property type="entry name" value="A36715"/>
</dbReference>
<dbReference type="RefSeq" id="WP_039999104.1">
    <property type="nucleotide sequence ID" value="NZ_JAFCAF010000013.1"/>
</dbReference>
<dbReference type="SMR" id="P15922"/>
<dbReference type="CAZy" id="GH28">
    <property type="family name" value="Glycoside Hydrolase Family 28"/>
</dbReference>
<dbReference type="BioCyc" id="MetaCyc:MONOMER-15662"/>
<dbReference type="GO" id="GO:0005576">
    <property type="term" value="C:extracellular region"/>
    <property type="evidence" value="ECO:0007669"/>
    <property type="project" value="UniProtKB-SubCell"/>
</dbReference>
<dbReference type="GO" id="GO:0033917">
    <property type="term" value="F:exo-poly-alpha-galacturonosidase activity"/>
    <property type="evidence" value="ECO:0007669"/>
    <property type="project" value="UniProtKB-EC"/>
</dbReference>
<dbReference type="GO" id="GO:0004650">
    <property type="term" value="F:polygalacturonase activity"/>
    <property type="evidence" value="ECO:0007669"/>
    <property type="project" value="InterPro"/>
</dbReference>
<dbReference type="GO" id="GO:0005975">
    <property type="term" value="P:carbohydrate metabolic process"/>
    <property type="evidence" value="ECO:0007669"/>
    <property type="project" value="InterPro"/>
</dbReference>
<dbReference type="GO" id="GO:0071555">
    <property type="term" value="P:cell wall organization"/>
    <property type="evidence" value="ECO:0007669"/>
    <property type="project" value="UniProtKB-KW"/>
</dbReference>
<dbReference type="CDD" id="cd00063">
    <property type="entry name" value="FN3"/>
    <property type="match status" value="1"/>
</dbReference>
<dbReference type="Gene3D" id="2.60.40.10">
    <property type="entry name" value="Immunoglobulins"/>
    <property type="match status" value="1"/>
</dbReference>
<dbReference type="Gene3D" id="2.160.20.10">
    <property type="entry name" value="Single-stranded right-handed beta-helix, Pectin lyase-like"/>
    <property type="match status" value="1"/>
</dbReference>
<dbReference type="InterPro" id="IPR003961">
    <property type="entry name" value="FN3_dom"/>
</dbReference>
<dbReference type="InterPro" id="IPR036116">
    <property type="entry name" value="FN3_sf"/>
</dbReference>
<dbReference type="InterPro" id="IPR051801">
    <property type="entry name" value="GH28_Enzymes"/>
</dbReference>
<dbReference type="InterPro" id="IPR000743">
    <property type="entry name" value="Glyco_hydro_28"/>
</dbReference>
<dbReference type="InterPro" id="IPR013783">
    <property type="entry name" value="Ig-like_fold"/>
</dbReference>
<dbReference type="InterPro" id="IPR012334">
    <property type="entry name" value="Pectin_lyas_fold"/>
</dbReference>
<dbReference type="InterPro" id="IPR011050">
    <property type="entry name" value="Pectin_lyase_fold/virulence"/>
</dbReference>
<dbReference type="InterPro" id="IPR024535">
    <property type="entry name" value="RHGA/B-epi-like_pectate_lyase"/>
</dbReference>
<dbReference type="PANTHER" id="PTHR31339">
    <property type="entry name" value="PECTIN LYASE-RELATED"/>
    <property type="match status" value="1"/>
</dbReference>
<dbReference type="PANTHER" id="PTHR31339:SF9">
    <property type="entry name" value="PLASMIN AND FIBRONECTIN-BINDING PROTEIN A"/>
    <property type="match status" value="1"/>
</dbReference>
<dbReference type="Pfam" id="PF00041">
    <property type="entry name" value="fn3"/>
    <property type="match status" value="1"/>
</dbReference>
<dbReference type="Pfam" id="PF00295">
    <property type="entry name" value="Glyco_hydro_28"/>
    <property type="match status" value="1"/>
</dbReference>
<dbReference type="Pfam" id="PF12708">
    <property type="entry name" value="Pect-lyase_RHGA_epim"/>
    <property type="match status" value="1"/>
</dbReference>
<dbReference type="SMART" id="SM00060">
    <property type="entry name" value="FN3"/>
    <property type="match status" value="1"/>
</dbReference>
<dbReference type="SUPFAM" id="SSF49265">
    <property type="entry name" value="Fibronectin type III"/>
    <property type="match status" value="1"/>
</dbReference>
<dbReference type="SUPFAM" id="SSF51126">
    <property type="entry name" value="Pectin lyase-like"/>
    <property type="match status" value="1"/>
</dbReference>
<dbReference type="PROSITE" id="PS50853">
    <property type="entry name" value="FN3"/>
    <property type="match status" value="1"/>
</dbReference>
<dbReference type="PROSITE" id="PS00502">
    <property type="entry name" value="POLYGALACTURONASE"/>
    <property type="match status" value="1"/>
</dbReference>
<accession>P15922</accession>
<keyword id="KW-0961">Cell wall biogenesis/degradation</keyword>
<keyword id="KW-0903">Direct protein sequencing</keyword>
<keyword id="KW-0326">Glycosidase</keyword>
<keyword id="KW-0378">Hydrolase</keyword>
<keyword id="KW-0677">Repeat</keyword>
<keyword id="KW-0964">Secreted</keyword>
<keyword id="KW-0732">Signal</keyword>
<sequence>MKVITFSRRSALASIVATCLMSTPALAATAQAPQKLQIPTLSYDDHSVMLVWDTPEDTSNITDYQIYQNGQLIGLASQNNDKNSPAKPYISAFYKSDAANFHHRIVLQNAKVDGLKAGTDYQFTVRTVYADGTTSNDSNTVTTTTTAVPKVINITQYGAKGDGTTLNTSAIQKAIDACPTGCRIDVPAGVFKTGALWLKSDMTLNLLQGATLLGSDNAADYPDAYKIYSYVSQVRPASLLNAIDKNSSAVGTFKNIRIVGKGIIDGNGWKRSADAKDELGNTLPQYVKSDNSKVSKDGILAKNQVAAAVATGMDTKTAYSQRRSSLVTLRGVQNAYIADVTIRNPANHGIMFLESENVVENSVIHQTFNANNGDGVEFGNSQNIMVFNSVFDTGDDSINFAAGMGQDAQKQEPSQNAWLFNNFFRHGHGAVVLGSHTGAGIVDVLAENNVITQNDVGLRAKSAPAIGGGAHGIVFRNSAMKNLAKQAVIVTLSYADNNGTIDYTPAKVPARFYDFTVKNVTVQDSTGSNPAIEITGDSSKDIWHSQFIFSNMKLSGVSPTSISDLSDSQFNNLTFSNLRSGSSPWKFGTVKNVTVDGKTVTP</sequence>
<organism>
    <name type="scientific">Dickeya chrysanthemi</name>
    <name type="common">Pectobacterium chrysanthemi</name>
    <name type="synonym">Erwinia chrysanthemi</name>
    <dbReference type="NCBI Taxonomy" id="556"/>
    <lineage>
        <taxon>Bacteria</taxon>
        <taxon>Pseudomonadati</taxon>
        <taxon>Pseudomonadota</taxon>
        <taxon>Gammaproteobacteria</taxon>
        <taxon>Enterobacterales</taxon>
        <taxon>Pectobacteriaceae</taxon>
        <taxon>Dickeya</taxon>
    </lineage>
</organism>
<reference key="1">
    <citation type="journal article" date="1990" name="J. Bacteriol.">
        <title>Molecular cloning, nucleotide sequence, and marker exchange mutagenesis of the exo-poly-alpha-D-galacturonosidase-encoding pehX gene of Erwinia chrysanthemi EC16.</title>
        <authorList>
            <person name="He S.Y."/>
            <person name="Collmer A."/>
        </authorList>
    </citation>
    <scope>NUCLEOTIDE SEQUENCE [GENOMIC DNA]</scope>
    <scope>PROTEIN SEQUENCE OF 28-40</scope>
    <scope>SUBCELLULAR LOCATION</scope>
    <scope>FUNCTION</scope>
    <scope>CATALYTIC ACTIVITY</scope>
    <source>
        <strain>EC16</strain>
    </source>
</reference>
<reference key="2">
    <citation type="journal article" date="1992" name="Proc. Natl. Acad. Sci. U.S.A.">
        <title>Proposed acquisition of an animal protein domain by bacteria.</title>
        <authorList>
            <person name="Bork P."/>
            <person name="Doolittle R.F."/>
        </authorList>
    </citation>
    <scope>DOMAIN FIBRONECTIN TYPE-III</scope>
</reference>
<feature type="signal peptide" evidence="3">
    <location>
        <begin position="1"/>
        <end position="27"/>
    </location>
</feature>
<feature type="chain" id="PRO_0000024824" description="Exo-poly-alpha-D-galacturonosidase">
    <location>
        <begin position="28"/>
        <end position="602"/>
    </location>
</feature>
<feature type="domain" description="Fibronectin type-III" evidence="1">
    <location>
        <begin position="32"/>
        <end position="149"/>
    </location>
</feature>
<feature type="active site" description="Proton donor" evidence="2">
    <location>
        <position position="395"/>
    </location>
</feature>
<feature type="active site" evidence="2">
    <location>
        <position position="428"/>
    </location>
</feature>